<organism>
    <name type="scientific">Rickettsia canadensis (strain McKiel)</name>
    <dbReference type="NCBI Taxonomy" id="293613"/>
    <lineage>
        <taxon>Bacteria</taxon>
        <taxon>Pseudomonadati</taxon>
        <taxon>Pseudomonadota</taxon>
        <taxon>Alphaproteobacteria</taxon>
        <taxon>Rickettsiales</taxon>
        <taxon>Rickettsiaceae</taxon>
        <taxon>Rickettsieae</taxon>
        <taxon>Rickettsia</taxon>
        <taxon>belli group</taxon>
    </lineage>
</organism>
<name>Y140_RICCK</name>
<proteinExistence type="inferred from homology"/>
<comment type="similarity">
    <text evidence="1">Belongs to the UPF0301 (AlgH) family.</text>
</comment>
<sequence length="189" mass="21426">MSDKIFHNLSGKTLVATPHVITKGIYHKSLIYMLSHTEEGAIGLIFNRLVNHIDLKSFFKIKNDEITNPVMVPIYLGGPVEHEKGFFLHSSDYNKNLLLDFHNDLAVSSNLEISEDIAFGKGPKNSLFIVGYTAWKSGQLEEELEKNLWLVMDCNKEFIFADNPESKWHNALKHLGIDEIHFSSQIGNA</sequence>
<reference key="1">
    <citation type="submission" date="2007-09" db="EMBL/GenBank/DDBJ databases">
        <title>Complete genome sequence of Rickettsia canadensis.</title>
        <authorList>
            <person name="Madan A."/>
            <person name="Fahey J."/>
            <person name="Helton E."/>
            <person name="Ketteman M."/>
            <person name="Madan A."/>
            <person name="Rodrigues S."/>
            <person name="Sanchez A."/>
            <person name="Whiting M."/>
            <person name="Dasch G."/>
            <person name="Eremeeva M."/>
        </authorList>
    </citation>
    <scope>NUCLEOTIDE SEQUENCE [LARGE SCALE GENOMIC DNA]</scope>
    <source>
        <strain>McKiel</strain>
    </source>
</reference>
<gene>
    <name type="ordered locus">A1E_00140</name>
</gene>
<protein>
    <recommendedName>
        <fullName evidence="1">UPF0301 protein A1E_00140</fullName>
    </recommendedName>
</protein>
<evidence type="ECO:0000255" key="1">
    <source>
        <dbReference type="HAMAP-Rule" id="MF_00758"/>
    </source>
</evidence>
<feature type="chain" id="PRO_1000046677" description="UPF0301 protein A1E_00140">
    <location>
        <begin position="1"/>
        <end position="189"/>
    </location>
</feature>
<dbReference type="EMBL" id="CP000409">
    <property type="protein sequence ID" value="ABV72981.1"/>
    <property type="molecule type" value="Genomic_DNA"/>
</dbReference>
<dbReference type="RefSeq" id="WP_012148182.1">
    <property type="nucleotide sequence ID" value="NC_009879.1"/>
</dbReference>
<dbReference type="SMR" id="A8EX98"/>
<dbReference type="STRING" id="293613.A1E_00140"/>
<dbReference type="KEGG" id="rcm:A1E_00140"/>
<dbReference type="eggNOG" id="COG1678">
    <property type="taxonomic scope" value="Bacteria"/>
</dbReference>
<dbReference type="HOGENOM" id="CLU_057596_1_0_5"/>
<dbReference type="Proteomes" id="UP000007056">
    <property type="component" value="Chromosome"/>
</dbReference>
<dbReference type="GO" id="GO:0005829">
    <property type="term" value="C:cytosol"/>
    <property type="evidence" value="ECO:0007669"/>
    <property type="project" value="TreeGrafter"/>
</dbReference>
<dbReference type="Gene3D" id="3.40.1740.10">
    <property type="entry name" value="VC0467-like"/>
    <property type="match status" value="1"/>
</dbReference>
<dbReference type="HAMAP" id="MF_00758">
    <property type="entry name" value="UPF0301"/>
    <property type="match status" value="1"/>
</dbReference>
<dbReference type="InterPro" id="IPR003774">
    <property type="entry name" value="AlgH-like"/>
</dbReference>
<dbReference type="NCBIfam" id="NF001268">
    <property type="entry name" value="PRK00228.1-4"/>
    <property type="match status" value="1"/>
</dbReference>
<dbReference type="PANTHER" id="PTHR30327">
    <property type="entry name" value="UNCHARACTERIZED PROTEIN YQGE"/>
    <property type="match status" value="1"/>
</dbReference>
<dbReference type="PANTHER" id="PTHR30327:SF1">
    <property type="entry name" value="UPF0301 PROTEIN YQGE"/>
    <property type="match status" value="1"/>
</dbReference>
<dbReference type="Pfam" id="PF02622">
    <property type="entry name" value="DUF179"/>
    <property type="match status" value="1"/>
</dbReference>
<dbReference type="SUPFAM" id="SSF143456">
    <property type="entry name" value="VC0467-like"/>
    <property type="match status" value="1"/>
</dbReference>
<accession>A8EX98</accession>